<gene>
    <name type="primary">iam</name>
</gene>
<name>ISOA_PSEAY</name>
<comment type="catalytic activity">
    <reaction evidence="2">
        <text>Hydrolysis of (1-&gt;6)-alpha-D-glucosidic branch linkages in glycogen, amylopectin and their beta-limit dextrins.</text>
        <dbReference type="EC" id="3.2.1.68"/>
    </reaction>
</comment>
<comment type="cofactor">
    <cofactor evidence="3">
        <name>Ca(2+)</name>
        <dbReference type="ChEBI" id="CHEBI:29108"/>
    </cofactor>
    <text evidence="3">Binds 1 Ca(2+) ion per subunit.</text>
</comment>
<comment type="subunit">
    <text>Monomer.</text>
</comment>
<comment type="subcellular location">
    <subcellularLocation>
        <location evidence="2">Secreted</location>
    </subcellularLocation>
</comment>
<comment type="induction">
    <text>By maltose.</text>
</comment>
<comment type="similarity">
    <text evidence="4">Belongs to the glycosyl hydrolase 13 family.</text>
</comment>
<comment type="sequence caution" evidence="4">
    <conflict type="frameshift">
        <sequence resource="EMBL-CDS" id="AAA25854"/>
    </conflict>
</comment>
<evidence type="ECO:0000250" key="1"/>
<evidence type="ECO:0000269" key="2">
    <source>
    </source>
</evidence>
<evidence type="ECO:0000269" key="3">
    <source>
    </source>
</evidence>
<evidence type="ECO:0000305" key="4"/>
<evidence type="ECO:0007744" key="5">
    <source>
        <dbReference type="PDB" id="1BF2"/>
    </source>
</evidence>
<evidence type="ECO:0007829" key="6">
    <source>
        <dbReference type="PDB" id="1BF2"/>
    </source>
</evidence>
<dbReference type="EC" id="3.2.1.68" evidence="2"/>
<dbReference type="EMBL" id="J03871">
    <property type="protein sequence ID" value="AAA25854.1"/>
    <property type="status" value="ALT_FRAME"/>
    <property type="molecule type" value="Genomic_DNA"/>
</dbReference>
<dbReference type="EMBL" id="X13378">
    <property type="protein sequence ID" value="CAA31754.1"/>
    <property type="molecule type" value="Genomic_DNA"/>
</dbReference>
<dbReference type="PDB" id="1BF2">
    <property type="method" value="X-ray"/>
    <property type="resolution" value="2.00 A"/>
    <property type="chains" value="A=27-776"/>
</dbReference>
<dbReference type="PDBsum" id="1BF2"/>
<dbReference type="SMR" id="P10342"/>
<dbReference type="CAZy" id="CBM48">
    <property type="family name" value="Carbohydrate-Binding Module Family 48"/>
</dbReference>
<dbReference type="CAZy" id="GH13">
    <property type="family name" value="Glycoside Hydrolase Family 13"/>
</dbReference>
<dbReference type="KEGG" id="ag:AAA25854"/>
<dbReference type="BRENDA" id="3.2.1.68">
    <property type="organism ID" value="5091"/>
</dbReference>
<dbReference type="EvolutionaryTrace" id="P10342"/>
<dbReference type="GO" id="GO:0005576">
    <property type="term" value="C:extracellular region"/>
    <property type="evidence" value="ECO:0007669"/>
    <property type="project" value="UniProtKB-SubCell"/>
</dbReference>
<dbReference type="GO" id="GO:0019156">
    <property type="term" value="F:isoamylase activity"/>
    <property type="evidence" value="ECO:0007669"/>
    <property type="project" value="UniProtKB-EC"/>
</dbReference>
<dbReference type="GO" id="GO:0046872">
    <property type="term" value="F:metal ion binding"/>
    <property type="evidence" value="ECO:0007669"/>
    <property type="project" value="UniProtKB-KW"/>
</dbReference>
<dbReference type="GO" id="GO:0005975">
    <property type="term" value="P:carbohydrate metabolic process"/>
    <property type="evidence" value="ECO:0007669"/>
    <property type="project" value="InterPro"/>
</dbReference>
<dbReference type="CDD" id="cd11326">
    <property type="entry name" value="AmyAc_Glg_debranch"/>
    <property type="match status" value="1"/>
</dbReference>
<dbReference type="CDD" id="cd02856">
    <property type="entry name" value="E_set_GDE_Isoamylase_N"/>
    <property type="match status" value="1"/>
</dbReference>
<dbReference type="Gene3D" id="3.20.20.80">
    <property type="entry name" value="Glycosidases"/>
    <property type="match status" value="1"/>
</dbReference>
<dbReference type="Gene3D" id="2.60.40.1180">
    <property type="entry name" value="Golgi alpha-mannosidase II"/>
    <property type="match status" value="1"/>
</dbReference>
<dbReference type="Gene3D" id="2.60.40.10">
    <property type="entry name" value="Immunoglobulins"/>
    <property type="match status" value="1"/>
</dbReference>
<dbReference type="InterPro" id="IPR044505">
    <property type="entry name" value="GlgX_Isoamylase_N_E_set"/>
</dbReference>
<dbReference type="InterPro" id="IPR006047">
    <property type="entry name" value="Glyco_hydro_13_cat_dom"/>
</dbReference>
<dbReference type="InterPro" id="IPR004193">
    <property type="entry name" value="Glyco_hydro_13_N"/>
</dbReference>
<dbReference type="InterPro" id="IPR013780">
    <property type="entry name" value="Glyco_hydro_b"/>
</dbReference>
<dbReference type="InterPro" id="IPR017853">
    <property type="entry name" value="Glycoside_hydrolase_SF"/>
</dbReference>
<dbReference type="InterPro" id="IPR013783">
    <property type="entry name" value="Ig-like_fold"/>
</dbReference>
<dbReference type="InterPro" id="IPR014756">
    <property type="entry name" value="Ig_E-set"/>
</dbReference>
<dbReference type="InterPro" id="IPR048644">
    <property type="entry name" value="Isoamylase_C"/>
</dbReference>
<dbReference type="PANTHER" id="PTHR43002">
    <property type="entry name" value="GLYCOGEN DEBRANCHING ENZYME"/>
    <property type="match status" value="1"/>
</dbReference>
<dbReference type="Pfam" id="PF00128">
    <property type="entry name" value="Alpha-amylase"/>
    <property type="match status" value="1"/>
</dbReference>
<dbReference type="Pfam" id="PF02922">
    <property type="entry name" value="CBM_48"/>
    <property type="match status" value="1"/>
</dbReference>
<dbReference type="Pfam" id="PF21331">
    <property type="entry name" value="Isoamylase_C"/>
    <property type="match status" value="1"/>
</dbReference>
<dbReference type="SMART" id="SM00642">
    <property type="entry name" value="Aamy"/>
    <property type="match status" value="1"/>
</dbReference>
<dbReference type="SUPFAM" id="SSF51445">
    <property type="entry name" value="(Trans)glycosidases"/>
    <property type="match status" value="1"/>
</dbReference>
<dbReference type="SUPFAM" id="SSF81296">
    <property type="entry name" value="E set domains"/>
    <property type="match status" value="1"/>
</dbReference>
<dbReference type="SUPFAM" id="SSF51011">
    <property type="entry name" value="Glycosyl hydrolase domain"/>
    <property type="match status" value="1"/>
</dbReference>
<accession>P10342</accession>
<proteinExistence type="evidence at protein level"/>
<protein>
    <recommendedName>
        <fullName>Isoamylase</fullName>
        <ecNumber evidence="2">3.2.1.68</ecNumber>
    </recommendedName>
</protein>
<sequence length="776" mass="83627">MKCPKILAALLGCAVLAGVPAMPAHAAINSMSLGASYDAQQANITFRVYSSQATRIVLYLYSAGYGVQESATYTLSPAGSGVWAVTVPVSSIKAAGITGAVYYGYRAWGPNWPYASNWGKGSQAGFVSDVDANGDRFNPNKLLLDPYAQEVSQDPLNPSNQNGNVFASGASYRTTDSGIYAPKGVVLVPSTQSTGTKPTRAQKDDVIYEVHVRGFTEQDTSIPAQYRGTYYGAGLKASYLASLGVTAVEFLPVQETQNDANDVVPNSDANQNYWGYMTENYFSPDRRYAYNKAAGGPTAEFQAMVQAFHNAGIKVYMDVVYNHTAEGGTWTSSDPTTATIYSWRGLDNATYYELTSGNQYFYDNTGIGANFNTYNTVAQNLIVDSLAYWANTMGVDGFRFDLASVLGNSCLNGAYTASAPNCPNGGYNFDAADSNVAINRILREFTVRPAAGGSGLDLFAEPWAIGGNSYQLGGFPQGWSEWNGLFRDSLRQAQNELGSMTIYVTQDANDFSGSSNLFQSSGRSPWNSINFIDVHDGMTLKDVYSCNGANNSQAWPYGPSDGGTSTNYSWDQGMSAGTGAAVDQRRAARTGMAFEMLSAGTPLMQGGDEYLRTLQCNNNAYNLDSSANWLTYSWTTDQSNFYTFAQRLIAFRKAHPALRPSSWYSGSQLTWYQPSGAVADSNYWNNTSNYAIAYAINGPSLGDSNSIYVAYNGWSSSVTFTLPAPPSGTQWYRVTDTCDWNDGASTFVAPGSETLIGGAGTTYGQCGQSLLLLISK</sequence>
<reference key="1">
    <citation type="journal article" date="1988" name="J. Biol. Chem.">
        <title>Cloning and nucleotide sequence of the isoamylase gene from Pseudomonas amyloderamosa SB-15.</title>
        <authorList>
            <person name="Amemura A."/>
            <person name="Chakraborty R."/>
            <person name="Fujita M."/>
            <person name="Noumi T."/>
            <person name="Futai M."/>
        </authorList>
    </citation>
    <scope>NUCLEOTIDE SEQUENCE [GENOMIC DNA]</scope>
    <source>
        <strain>SB-15</strain>
    </source>
</reference>
<reference key="2">
    <citation type="journal article" date="1990" name="Biochim. Biophys. Acta">
        <title>Nucleotide sequence and expression of the isoamylase gene from an isoamylase-hyperproducing mutant, Pseudomonas amyloderamosa JD210.</title>
        <authorList>
            <person name="Chen J.H."/>
            <person name="Chen Z.Y."/>
            <person name="Chow T.Y."/>
            <person name="Chen J.C."/>
            <person name="Tan S.T."/>
            <person name="Hsu W.H."/>
        </authorList>
    </citation>
    <scope>NUCLEOTIDE SEQUENCE [GENOMIC DNA]</scope>
    <scope>CATALYTIC ACTIVITY</scope>
    <scope>SUBCELLULAR LOCATION</scope>
    <source>
        <strain>JD210</strain>
    </source>
</reference>
<reference key="3">
    <citation type="journal article" date="1989" name="J. Bacteriol.">
        <title>Transcription of the isoamylase gene (iam) in Pseudomonas amyloderamosa SB-15.</title>
        <authorList>
            <person name="Amemura A."/>
            <person name="Fujita M."/>
            <person name="Futai M."/>
        </authorList>
    </citation>
    <scope>NUCLEOTIDE SEQUENCE [GENOMIC DNA] OF 744-776</scope>
    <source>
        <strain>SB-15</strain>
    </source>
</reference>
<reference key="4">
    <citation type="journal article" date="1998" name="J. Mol. Biol.">
        <title>Three-dimensional structure of Pseudomonas isoamylase at 2.2-A resolution.</title>
        <authorList>
            <person name="Katsuya Y."/>
            <person name="Mezaki Y."/>
            <person name="Kubota M."/>
            <person name="Matsuura Y."/>
        </authorList>
    </citation>
    <scope>X-RAY CRYSTALLOGRAPHY (2.00 ANGSTROMS) OF 27-776 IN COMPLEX WITH CALCIUM</scope>
    <scope>DISULFIDE BONDS</scope>
    <scope>COFACTOR</scope>
</reference>
<feature type="signal peptide">
    <location>
        <begin position="1"/>
        <end position="26"/>
    </location>
</feature>
<feature type="chain" id="PRO_0000001424" description="Isoamylase">
    <location>
        <begin position="27"/>
        <end position="776"/>
    </location>
</feature>
<feature type="active site" description="Nucleophile">
    <location>
        <position position="401"/>
    </location>
</feature>
<feature type="active site" description="Proton donor">
    <location>
        <position position="461"/>
    </location>
</feature>
<feature type="binding site" evidence="3 5">
    <location>
        <position position="154"/>
    </location>
    <ligand>
        <name>Ca(2+)</name>
        <dbReference type="ChEBI" id="CHEBI:29108"/>
    </ligand>
</feature>
<feature type="binding site" evidence="3 5">
    <location>
        <position position="255"/>
    </location>
    <ligand>
        <name>Ca(2+)</name>
        <dbReference type="ChEBI" id="CHEBI:29108"/>
    </ligand>
</feature>
<feature type="binding site" evidence="3 5">
    <location>
        <position position="256"/>
    </location>
    <ligand>
        <name>Ca(2+)</name>
        <dbReference type="ChEBI" id="CHEBI:29108"/>
    </ligand>
</feature>
<feature type="binding site" evidence="3 5">
    <location>
        <position position="258"/>
    </location>
    <ligand>
        <name>Ca(2+)</name>
        <dbReference type="ChEBI" id="CHEBI:29108"/>
    </ligand>
</feature>
<feature type="binding site" evidence="3 5">
    <location>
        <position position="285"/>
    </location>
    <ligand>
        <name>Ca(2+)</name>
        <dbReference type="ChEBI" id="CHEBI:29108"/>
    </ligand>
</feature>
<feature type="site" description="Transition state stabilizer" evidence="1">
    <location>
        <position position="536"/>
    </location>
</feature>
<feature type="disulfide bond" evidence="3 5">
    <location>
        <begin position="410"/>
        <end position="422"/>
    </location>
</feature>
<feature type="disulfide bond" evidence="3 5">
    <location>
        <begin position="546"/>
        <end position="616"/>
    </location>
</feature>
<feature type="disulfide bond" evidence="3 5">
    <location>
        <begin position="738"/>
        <end position="766"/>
    </location>
</feature>
<feature type="sequence conflict" description="In Ref. 1; AAA25854." evidence="4" ref="1">
    <original>A</original>
    <variation>G</variation>
    <location>
        <position position="8"/>
    </location>
</feature>
<feature type="sequence conflict" description="In Ref. 1; AAA25854." evidence="4" ref="1">
    <original>F</original>
    <variation>C</variation>
    <location>
        <position position="126"/>
    </location>
</feature>
<feature type="sequence conflict" description="In Ref. 1; AAA25854." evidence="4" ref="1">
    <original>G</original>
    <variation>C</variation>
    <location>
        <position position="169"/>
    </location>
</feature>
<feature type="sequence conflict" description="In Ref. 1; AAA25854." evidence="4" ref="1">
    <original>L</original>
    <variation>V</variation>
    <location>
        <position position="386"/>
    </location>
</feature>
<feature type="sequence conflict" description="In Ref. 1; AAA25854." evidence="4" ref="1">
    <original>GAYT</original>
    <variation>AVH</variation>
    <location>
        <begin position="413"/>
        <end position="416"/>
    </location>
</feature>
<feature type="sequence conflict" description="In Ref. 1; AAA25854." evidence="4" ref="1">
    <original>WP</original>
    <variation>S</variation>
    <location>
        <begin position="555"/>
        <end position="556"/>
    </location>
</feature>
<feature type="sequence conflict" description="In Ref. 1; AAA25854." evidence="4" ref="1">
    <original>LRPS</original>
    <variation>SPV</variation>
    <location>
        <begin position="658"/>
        <end position="661"/>
    </location>
</feature>
<feature type="strand" evidence="6">
    <location>
        <begin position="34"/>
        <end position="37"/>
    </location>
</feature>
<feature type="strand" evidence="6">
    <location>
        <begin position="41"/>
        <end position="49"/>
    </location>
</feature>
<feature type="strand" evidence="6">
    <location>
        <begin position="54"/>
        <end position="66"/>
    </location>
</feature>
<feature type="strand" evidence="6">
    <location>
        <begin position="70"/>
        <end position="74"/>
    </location>
</feature>
<feature type="strand" evidence="6">
    <location>
        <begin position="82"/>
        <end position="88"/>
    </location>
</feature>
<feature type="helix" evidence="6">
    <location>
        <begin position="89"/>
        <end position="94"/>
    </location>
</feature>
<feature type="strand" evidence="6">
    <location>
        <begin position="102"/>
        <end position="109"/>
    </location>
</feature>
<feature type="helix" evidence="6">
    <location>
        <begin position="163"/>
        <end position="166"/>
    </location>
</feature>
<feature type="turn" evidence="6">
    <location>
        <begin position="170"/>
        <end position="174"/>
    </location>
</feature>
<feature type="turn" evidence="6">
    <location>
        <begin position="178"/>
        <end position="180"/>
    </location>
</feature>
<feature type="helix" evidence="6">
    <location>
        <begin position="202"/>
        <end position="204"/>
    </location>
</feature>
<feature type="strand" evidence="6">
    <location>
        <begin position="207"/>
        <end position="210"/>
    </location>
</feature>
<feature type="helix" evidence="6">
    <location>
        <begin position="212"/>
        <end position="216"/>
    </location>
</feature>
<feature type="helix" evidence="6">
    <location>
        <begin position="224"/>
        <end position="226"/>
    </location>
</feature>
<feature type="helix" evidence="6">
    <location>
        <begin position="230"/>
        <end position="235"/>
    </location>
</feature>
<feature type="helix" evidence="6">
    <location>
        <begin position="237"/>
        <end position="243"/>
    </location>
</feature>
<feature type="strand" evidence="6">
    <location>
        <begin position="247"/>
        <end position="251"/>
    </location>
</feature>
<feature type="turn" evidence="6">
    <location>
        <begin position="259"/>
        <end position="262"/>
    </location>
</feature>
<feature type="helix" evidence="6">
    <location>
        <begin position="286"/>
        <end position="288"/>
    </location>
</feature>
<feature type="helix" evidence="6">
    <location>
        <begin position="296"/>
        <end position="310"/>
    </location>
</feature>
<feature type="strand" evidence="6">
    <location>
        <begin position="314"/>
        <end position="319"/>
    </location>
</feature>
<feature type="strand" evidence="6">
    <location>
        <begin position="328"/>
        <end position="333"/>
    </location>
</feature>
<feature type="helix" evidence="6">
    <location>
        <begin position="343"/>
        <end position="351"/>
    </location>
</feature>
<feature type="strand" evidence="6">
    <location>
        <begin position="358"/>
        <end position="361"/>
    </location>
</feature>
<feature type="strand" evidence="6">
    <location>
        <begin position="364"/>
        <end position="368"/>
    </location>
</feature>
<feature type="helix" evidence="6">
    <location>
        <begin position="376"/>
        <end position="391"/>
    </location>
</feature>
<feature type="strand" evidence="6">
    <location>
        <begin position="397"/>
        <end position="400"/>
    </location>
</feature>
<feature type="helix" evidence="6">
    <location>
        <begin position="403"/>
        <end position="407"/>
    </location>
</feature>
<feature type="strand" evidence="6">
    <location>
        <begin position="411"/>
        <end position="414"/>
    </location>
</feature>
<feature type="helix" evidence="6">
    <location>
        <begin position="437"/>
        <end position="444"/>
    </location>
</feature>
<feature type="strand" evidence="6">
    <location>
        <begin position="454"/>
        <end position="460"/>
    </location>
</feature>
<feature type="strand" evidence="6">
    <location>
        <begin position="480"/>
        <end position="482"/>
    </location>
</feature>
<feature type="helix" evidence="6">
    <location>
        <begin position="484"/>
        <end position="495"/>
    </location>
</feature>
<feature type="helix" evidence="6">
    <location>
        <begin position="504"/>
        <end position="511"/>
    </location>
</feature>
<feature type="helix" evidence="6">
    <location>
        <begin position="515"/>
        <end position="518"/>
    </location>
</feature>
<feature type="helix" evidence="6">
    <location>
        <begin position="519"/>
        <end position="521"/>
    </location>
</feature>
<feature type="helix" evidence="6">
    <location>
        <begin position="525"/>
        <end position="527"/>
    </location>
</feature>
<feature type="strand" evidence="6">
    <location>
        <begin position="528"/>
        <end position="530"/>
    </location>
</feature>
<feature type="strand" evidence="6">
    <location>
        <begin position="535"/>
        <end position="537"/>
    </location>
</feature>
<feature type="helix" evidence="6">
    <location>
        <begin position="540"/>
        <end position="543"/>
    </location>
</feature>
<feature type="turn" evidence="6">
    <location>
        <begin position="572"/>
        <end position="577"/>
    </location>
</feature>
<feature type="helix" evidence="6">
    <location>
        <begin position="581"/>
        <end position="597"/>
    </location>
</feature>
<feature type="strand" evidence="6">
    <location>
        <begin position="598"/>
        <end position="605"/>
    </location>
</feature>
<feature type="helix" evidence="6">
    <location>
        <begin position="608"/>
        <end position="610"/>
    </location>
</feature>
<feature type="turn" evidence="6">
    <location>
        <begin position="626"/>
        <end position="628"/>
    </location>
</feature>
<feature type="helix" evidence="6">
    <location>
        <begin position="636"/>
        <end position="654"/>
    </location>
</feature>
<feature type="helix" evidence="6">
    <location>
        <begin position="656"/>
        <end position="658"/>
    </location>
</feature>
<feature type="turn" evidence="6">
    <location>
        <begin position="666"/>
        <end position="668"/>
    </location>
</feature>
<feature type="strand" evidence="6">
    <location>
        <begin position="669"/>
        <end position="672"/>
    </location>
</feature>
<feature type="strand" evidence="6">
    <location>
        <begin position="676"/>
        <end position="678"/>
    </location>
</feature>
<feature type="helix" evidence="6">
    <location>
        <begin position="681"/>
        <end position="684"/>
    </location>
</feature>
<feature type="strand" evidence="6">
    <location>
        <begin position="691"/>
        <end position="696"/>
    </location>
</feature>
<feature type="helix" evidence="6">
    <location>
        <begin position="698"/>
        <end position="701"/>
    </location>
</feature>
<feature type="strand" evidence="6">
    <location>
        <begin position="707"/>
        <end position="712"/>
    </location>
</feature>
<feature type="strand" evidence="6">
    <location>
        <begin position="714"/>
        <end position="716"/>
    </location>
</feature>
<feature type="strand" evidence="6">
    <location>
        <begin position="718"/>
        <end position="721"/>
    </location>
</feature>
<feature type="strand" evidence="6">
    <location>
        <begin position="726"/>
        <end position="736"/>
    </location>
</feature>
<feature type="helix" evidence="6">
    <location>
        <begin position="739"/>
        <end position="741"/>
    </location>
</feature>
<feature type="strand" evidence="6">
    <location>
        <begin position="754"/>
        <end position="758"/>
    </location>
</feature>
<feature type="strand" evidence="6">
    <location>
        <begin position="762"/>
        <end position="765"/>
    </location>
</feature>
<feature type="strand" evidence="6">
    <location>
        <begin position="767"/>
        <end position="776"/>
    </location>
</feature>
<keyword id="KW-0002">3D-structure</keyword>
<keyword id="KW-0106">Calcium</keyword>
<keyword id="KW-1015">Disulfide bond</keyword>
<keyword id="KW-0326">Glycosidase</keyword>
<keyword id="KW-0378">Hydrolase</keyword>
<keyword id="KW-0479">Metal-binding</keyword>
<keyword id="KW-0964">Secreted</keyword>
<keyword id="KW-0732">Signal</keyword>
<organism>
    <name type="scientific">Pseudomonas amyloderamosa</name>
    <dbReference type="NCBI Taxonomy" id="32043"/>
    <lineage>
        <taxon>Bacteria</taxon>
        <taxon>Pseudomonadati</taxon>
        <taxon>Pseudomonadota</taxon>
        <taxon>Gammaproteobacteria</taxon>
        <taxon>Pseudomonadales</taxon>
        <taxon>Pseudomonadaceae</taxon>
        <taxon>Pseudomonas</taxon>
    </lineage>
</organism>